<keyword id="KW-0687">Ribonucleoprotein</keyword>
<keyword id="KW-0689">Ribosomal protein</keyword>
<keyword id="KW-0694">RNA-binding</keyword>
<keyword id="KW-0699">rRNA-binding</keyword>
<name>RS11_CHLP8</name>
<organism>
    <name type="scientific">Chlorobaculum parvum (strain DSM 263 / NCIMB 8327)</name>
    <name type="common">Chlorobium vibrioforme subsp. thiosulfatophilum</name>
    <dbReference type="NCBI Taxonomy" id="517417"/>
    <lineage>
        <taxon>Bacteria</taxon>
        <taxon>Pseudomonadati</taxon>
        <taxon>Chlorobiota</taxon>
        <taxon>Chlorobiia</taxon>
        <taxon>Chlorobiales</taxon>
        <taxon>Chlorobiaceae</taxon>
        <taxon>Chlorobaculum</taxon>
    </lineage>
</organism>
<feature type="chain" id="PRO_1000141067" description="Small ribosomal subunit protein uS11">
    <location>
        <begin position="1"/>
        <end position="127"/>
    </location>
</feature>
<gene>
    <name evidence="1" type="primary">rpsK</name>
    <name type="ordered locus">Cpar_0202</name>
</gene>
<dbReference type="EMBL" id="CP001099">
    <property type="protein sequence ID" value="ACF10629.1"/>
    <property type="molecule type" value="Genomic_DNA"/>
</dbReference>
<dbReference type="RefSeq" id="WP_012501463.1">
    <property type="nucleotide sequence ID" value="NC_011027.1"/>
</dbReference>
<dbReference type="SMR" id="B3QR96"/>
<dbReference type="STRING" id="517417.Cpar_0202"/>
<dbReference type="KEGG" id="cpc:Cpar_0202"/>
<dbReference type="eggNOG" id="COG0100">
    <property type="taxonomic scope" value="Bacteria"/>
</dbReference>
<dbReference type="HOGENOM" id="CLU_072439_5_0_10"/>
<dbReference type="OrthoDB" id="9806415at2"/>
<dbReference type="Proteomes" id="UP000008811">
    <property type="component" value="Chromosome"/>
</dbReference>
<dbReference type="GO" id="GO:1990904">
    <property type="term" value="C:ribonucleoprotein complex"/>
    <property type="evidence" value="ECO:0007669"/>
    <property type="project" value="UniProtKB-KW"/>
</dbReference>
<dbReference type="GO" id="GO:0005840">
    <property type="term" value="C:ribosome"/>
    <property type="evidence" value="ECO:0007669"/>
    <property type="project" value="UniProtKB-KW"/>
</dbReference>
<dbReference type="GO" id="GO:0019843">
    <property type="term" value="F:rRNA binding"/>
    <property type="evidence" value="ECO:0007669"/>
    <property type="project" value="UniProtKB-UniRule"/>
</dbReference>
<dbReference type="GO" id="GO:0003735">
    <property type="term" value="F:structural constituent of ribosome"/>
    <property type="evidence" value="ECO:0007669"/>
    <property type="project" value="InterPro"/>
</dbReference>
<dbReference type="GO" id="GO:0006412">
    <property type="term" value="P:translation"/>
    <property type="evidence" value="ECO:0007669"/>
    <property type="project" value="UniProtKB-UniRule"/>
</dbReference>
<dbReference type="FunFam" id="3.30.420.80:FF:000004">
    <property type="entry name" value="30S ribosomal protein S11"/>
    <property type="match status" value="1"/>
</dbReference>
<dbReference type="Gene3D" id="3.30.420.80">
    <property type="entry name" value="Ribosomal protein S11"/>
    <property type="match status" value="1"/>
</dbReference>
<dbReference type="HAMAP" id="MF_01310">
    <property type="entry name" value="Ribosomal_uS11"/>
    <property type="match status" value="1"/>
</dbReference>
<dbReference type="InterPro" id="IPR001971">
    <property type="entry name" value="Ribosomal_uS11"/>
</dbReference>
<dbReference type="InterPro" id="IPR019981">
    <property type="entry name" value="Ribosomal_uS11_bac-type"/>
</dbReference>
<dbReference type="InterPro" id="IPR018102">
    <property type="entry name" value="Ribosomal_uS11_CS"/>
</dbReference>
<dbReference type="InterPro" id="IPR036967">
    <property type="entry name" value="Ribosomal_uS11_sf"/>
</dbReference>
<dbReference type="NCBIfam" id="NF003698">
    <property type="entry name" value="PRK05309.1"/>
    <property type="match status" value="1"/>
</dbReference>
<dbReference type="NCBIfam" id="TIGR03632">
    <property type="entry name" value="uS11_bact"/>
    <property type="match status" value="1"/>
</dbReference>
<dbReference type="PANTHER" id="PTHR11759">
    <property type="entry name" value="40S RIBOSOMAL PROTEIN S14/30S RIBOSOMAL PROTEIN S11"/>
    <property type="match status" value="1"/>
</dbReference>
<dbReference type="Pfam" id="PF00411">
    <property type="entry name" value="Ribosomal_S11"/>
    <property type="match status" value="1"/>
</dbReference>
<dbReference type="PIRSF" id="PIRSF002131">
    <property type="entry name" value="Ribosomal_S11"/>
    <property type="match status" value="1"/>
</dbReference>
<dbReference type="SUPFAM" id="SSF53137">
    <property type="entry name" value="Translational machinery components"/>
    <property type="match status" value="1"/>
</dbReference>
<dbReference type="PROSITE" id="PS00054">
    <property type="entry name" value="RIBOSOMAL_S11"/>
    <property type="match status" value="1"/>
</dbReference>
<protein>
    <recommendedName>
        <fullName evidence="1">Small ribosomal subunit protein uS11</fullName>
    </recommendedName>
    <alternativeName>
        <fullName evidence="2">30S ribosomal protein S11</fullName>
    </alternativeName>
</protein>
<evidence type="ECO:0000255" key="1">
    <source>
        <dbReference type="HAMAP-Rule" id="MF_01310"/>
    </source>
</evidence>
<evidence type="ECO:0000305" key="2"/>
<proteinExistence type="inferred from homology"/>
<comment type="function">
    <text evidence="1">Located on the platform of the 30S subunit, it bridges several disparate RNA helices of the 16S rRNA. Forms part of the Shine-Dalgarno cleft in the 70S ribosome.</text>
</comment>
<comment type="subunit">
    <text evidence="1">Part of the 30S ribosomal subunit. Interacts with proteins S7 and S18. Binds to IF-3.</text>
</comment>
<comment type="similarity">
    <text evidence="1">Belongs to the universal ribosomal protein uS11 family.</text>
</comment>
<accession>B3QR96</accession>
<sequence>MATASRKKKKVKVTPEGTVHIKASFNNIMVTITDTLGNTVSWSSAGKNGFRGSKKNTPYASQVTSEAAAKEAYDLGMRYVDVLIKGPGSGRDAAIRALQGVGLEVRSIRDITPLPHNGCRPPKRRRV</sequence>
<reference key="1">
    <citation type="submission" date="2008-06" db="EMBL/GenBank/DDBJ databases">
        <title>Complete sequence of Chlorobaculum parvum NCIB 8327.</title>
        <authorList>
            <consortium name="US DOE Joint Genome Institute"/>
            <person name="Lucas S."/>
            <person name="Copeland A."/>
            <person name="Lapidus A."/>
            <person name="Glavina del Rio T."/>
            <person name="Dalin E."/>
            <person name="Tice H."/>
            <person name="Bruce D."/>
            <person name="Goodwin L."/>
            <person name="Pitluck S."/>
            <person name="Schmutz J."/>
            <person name="Larimer F."/>
            <person name="Land M."/>
            <person name="Hauser L."/>
            <person name="Kyrpides N."/>
            <person name="Mikhailova N."/>
            <person name="Zhao F."/>
            <person name="Li T."/>
            <person name="Liu Z."/>
            <person name="Overmann J."/>
            <person name="Bryant D.A."/>
            <person name="Richardson P."/>
        </authorList>
    </citation>
    <scope>NUCLEOTIDE SEQUENCE [LARGE SCALE GENOMIC DNA]</scope>
    <source>
        <strain>DSM 263 / NCIMB 8327</strain>
    </source>
</reference>